<evidence type="ECO:0000250" key="1"/>
<evidence type="ECO:0000305" key="2"/>
<reference key="1">
    <citation type="journal article" date="1997" name="Microbiology">
        <title>Sequence of the Bacillus subtilis genome region in the vicinity of the lev operon reveals two new extracytoplasmic function RNA polymerase sigma factors SigV and SigZ.</title>
        <authorList>
            <person name="Sorokin A."/>
            <person name="Bolotin A."/>
            <person name="Purnelle B."/>
            <person name="Hilbert H."/>
            <person name="Lauber J."/>
            <person name="Duesterhoeft A."/>
            <person name="Ehrlich S.D."/>
        </authorList>
    </citation>
    <scope>NUCLEOTIDE SEQUENCE [GENOMIC DNA]</scope>
    <source>
        <strain>168</strain>
    </source>
</reference>
<reference key="2">
    <citation type="journal article" date="1997" name="Nature">
        <title>The complete genome sequence of the Gram-positive bacterium Bacillus subtilis.</title>
        <authorList>
            <person name="Kunst F."/>
            <person name="Ogasawara N."/>
            <person name="Moszer I."/>
            <person name="Albertini A.M."/>
            <person name="Alloni G."/>
            <person name="Azevedo V."/>
            <person name="Bertero M.G."/>
            <person name="Bessieres P."/>
            <person name="Bolotin A."/>
            <person name="Borchert S."/>
            <person name="Borriss R."/>
            <person name="Boursier L."/>
            <person name="Brans A."/>
            <person name="Braun M."/>
            <person name="Brignell S.C."/>
            <person name="Bron S."/>
            <person name="Brouillet S."/>
            <person name="Bruschi C.V."/>
            <person name="Caldwell B."/>
            <person name="Capuano V."/>
            <person name="Carter N.M."/>
            <person name="Choi S.-K."/>
            <person name="Codani J.-J."/>
            <person name="Connerton I.F."/>
            <person name="Cummings N.J."/>
            <person name="Daniel R.A."/>
            <person name="Denizot F."/>
            <person name="Devine K.M."/>
            <person name="Duesterhoeft A."/>
            <person name="Ehrlich S.D."/>
            <person name="Emmerson P.T."/>
            <person name="Entian K.-D."/>
            <person name="Errington J."/>
            <person name="Fabret C."/>
            <person name="Ferrari E."/>
            <person name="Foulger D."/>
            <person name="Fritz C."/>
            <person name="Fujita M."/>
            <person name="Fujita Y."/>
            <person name="Fuma S."/>
            <person name="Galizzi A."/>
            <person name="Galleron N."/>
            <person name="Ghim S.-Y."/>
            <person name="Glaser P."/>
            <person name="Goffeau A."/>
            <person name="Golightly E.J."/>
            <person name="Grandi G."/>
            <person name="Guiseppi G."/>
            <person name="Guy B.J."/>
            <person name="Haga K."/>
            <person name="Haiech J."/>
            <person name="Harwood C.R."/>
            <person name="Henaut A."/>
            <person name="Hilbert H."/>
            <person name="Holsappel S."/>
            <person name="Hosono S."/>
            <person name="Hullo M.-F."/>
            <person name="Itaya M."/>
            <person name="Jones L.-M."/>
            <person name="Joris B."/>
            <person name="Karamata D."/>
            <person name="Kasahara Y."/>
            <person name="Klaerr-Blanchard M."/>
            <person name="Klein C."/>
            <person name="Kobayashi Y."/>
            <person name="Koetter P."/>
            <person name="Koningstein G."/>
            <person name="Krogh S."/>
            <person name="Kumano M."/>
            <person name="Kurita K."/>
            <person name="Lapidus A."/>
            <person name="Lardinois S."/>
            <person name="Lauber J."/>
            <person name="Lazarevic V."/>
            <person name="Lee S.-M."/>
            <person name="Levine A."/>
            <person name="Liu H."/>
            <person name="Masuda S."/>
            <person name="Mauel C."/>
            <person name="Medigue C."/>
            <person name="Medina N."/>
            <person name="Mellado R.P."/>
            <person name="Mizuno M."/>
            <person name="Moestl D."/>
            <person name="Nakai S."/>
            <person name="Noback M."/>
            <person name="Noone D."/>
            <person name="O'Reilly M."/>
            <person name="Ogawa K."/>
            <person name="Ogiwara A."/>
            <person name="Oudega B."/>
            <person name="Park S.-H."/>
            <person name="Parro V."/>
            <person name="Pohl T.M."/>
            <person name="Portetelle D."/>
            <person name="Porwollik S."/>
            <person name="Prescott A.M."/>
            <person name="Presecan E."/>
            <person name="Pujic P."/>
            <person name="Purnelle B."/>
            <person name="Rapoport G."/>
            <person name="Rey M."/>
            <person name="Reynolds S."/>
            <person name="Rieger M."/>
            <person name="Rivolta C."/>
            <person name="Rocha E."/>
            <person name="Roche B."/>
            <person name="Rose M."/>
            <person name="Sadaie Y."/>
            <person name="Sato T."/>
            <person name="Scanlan E."/>
            <person name="Schleich S."/>
            <person name="Schroeter R."/>
            <person name="Scoffone F."/>
            <person name="Sekiguchi J."/>
            <person name="Sekowska A."/>
            <person name="Seror S.J."/>
            <person name="Serror P."/>
            <person name="Shin B.-S."/>
            <person name="Soldo B."/>
            <person name="Sorokin A."/>
            <person name="Tacconi E."/>
            <person name="Takagi T."/>
            <person name="Takahashi H."/>
            <person name="Takemaru K."/>
            <person name="Takeuchi M."/>
            <person name="Tamakoshi A."/>
            <person name="Tanaka T."/>
            <person name="Terpstra P."/>
            <person name="Tognoni A."/>
            <person name="Tosato V."/>
            <person name="Uchiyama S."/>
            <person name="Vandenbol M."/>
            <person name="Vannier F."/>
            <person name="Vassarotti A."/>
            <person name="Viari A."/>
            <person name="Wambutt R."/>
            <person name="Wedler E."/>
            <person name="Wedler H."/>
            <person name="Weitzenegger T."/>
            <person name="Winters P."/>
            <person name="Wipat A."/>
            <person name="Yamamoto H."/>
            <person name="Yamane K."/>
            <person name="Yasumoto K."/>
            <person name="Yata K."/>
            <person name="Yoshida K."/>
            <person name="Yoshikawa H.-F."/>
            <person name="Zumstein E."/>
            <person name="Yoshikawa H."/>
            <person name="Danchin A."/>
        </authorList>
    </citation>
    <scope>NUCLEOTIDE SEQUENCE [LARGE SCALE GENOMIC DNA]</scope>
    <source>
        <strain>168</strain>
    </source>
</reference>
<accession>O05409</accession>
<name>SIGZ_BACSU</name>
<feature type="chain" id="PRO_0000094019" description="RNA polymerase sigma factor SigZ">
    <location>
        <begin position="1"/>
        <end position="176"/>
    </location>
</feature>
<feature type="DNA-binding region" description="H-T-H motif" evidence="1">
    <location>
        <begin position="125"/>
        <end position="144"/>
    </location>
</feature>
<feature type="short sequence motif" description="Polymerase core binding">
    <location>
        <begin position="30"/>
        <end position="43"/>
    </location>
</feature>
<gene>
    <name type="primary">sigZ</name>
    <name type="ordered locus">BSU26840</name>
</gene>
<proteinExistence type="inferred from homology"/>
<keyword id="KW-0238">DNA-binding</keyword>
<keyword id="KW-1185">Reference proteome</keyword>
<keyword id="KW-0731">Sigma factor</keyword>
<keyword id="KW-0804">Transcription</keyword>
<keyword id="KW-0805">Transcription regulation</keyword>
<comment type="function">
    <text>Sigma factors are initiation factors that promote the attachment of RNA polymerase to specific initiation sites and are then released.</text>
</comment>
<comment type="similarity">
    <text evidence="2">Belongs to the sigma-70 factor family. ECF subfamily.</text>
</comment>
<protein>
    <recommendedName>
        <fullName>RNA polymerase sigma factor SigZ</fullName>
    </recommendedName>
</protein>
<sequence length="176" mass="20717">MNIEDLWDQFHQPLKTYISHRVNDQSIVDDLLQIVFMKIQVHLPNLIDEQKIDSWIYRITRNTIIDFYRTKKTSEILPDVLHFNDSAEEENFTKEATVCIRSTIKRLPEKYREALELTDFQGLSQKELSEKLGISYSGAKSRVQRGRGKLKQLLEGCCHIEADRYGNIVDFRILKE</sequence>
<dbReference type="EMBL" id="U93875">
    <property type="protein sequence ID" value="AAB80887.1"/>
    <property type="molecule type" value="Genomic_DNA"/>
</dbReference>
<dbReference type="EMBL" id="AL009126">
    <property type="protein sequence ID" value="CAB14625.1"/>
    <property type="molecule type" value="Genomic_DNA"/>
</dbReference>
<dbReference type="PIR" id="C69707">
    <property type="entry name" value="C69707"/>
</dbReference>
<dbReference type="RefSeq" id="NP_390561.1">
    <property type="nucleotide sequence ID" value="NC_000964.3"/>
</dbReference>
<dbReference type="RefSeq" id="WP_004398507.1">
    <property type="nucleotide sequence ID" value="NZ_OZ025638.1"/>
</dbReference>
<dbReference type="SMR" id="O05409"/>
<dbReference type="FunCoup" id="O05409">
    <property type="interactions" value="100"/>
</dbReference>
<dbReference type="STRING" id="224308.BSU26840"/>
<dbReference type="PaxDb" id="224308-BSU26840"/>
<dbReference type="EnsemblBacteria" id="CAB14625">
    <property type="protein sequence ID" value="CAB14625"/>
    <property type="gene ID" value="BSU_26840"/>
</dbReference>
<dbReference type="GeneID" id="937617"/>
<dbReference type="KEGG" id="bsu:BSU26840"/>
<dbReference type="PATRIC" id="fig|224308.179.peg.2916"/>
<dbReference type="eggNOG" id="COG1595">
    <property type="taxonomic scope" value="Bacteria"/>
</dbReference>
<dbReference type="InParanoid" id="O05409"/>
<dbReference type="OrthoDB" id="9794508at2"/>
<dbReference type="PhylomeDB" id="O05409"/>
<dbReference type="BioCyc" id="BSUB:BSU26840-MONOMER"/>
<dbReference type="Proteomes" id="UP000001570">
    <property type="component" value="Chromosome"/>
</dbReference>
<dbReference type="GO" id="GO:0003677">
    <property type="term" value="F:DNA binding"/>
    <property type="evidence" value="ECO:0007669"/>
    <property type="project" value="UniProtKB-KW"/>
</dbReference>
<dbReference type="GO" id="GO:0016987">
    <property type="term" value="F:sigma factor activity"/>
    <property type="evidence" value="ECO:0000318"/>
    <property type="project" value="GO_Central"/>
</dbReference>
<dbReference type="GO" id="GO:0006352">
    <property type="term" value="P:DNA-templated transcription initiation"/>
    <property type="evidence" value="ECO:0007669"/>
    <property type="project" value="InterPro"/>
</dbReference>
<dbReference type="GO" id="GO:0006355">
    <property type="term" value="P:regulation of DNA-templated transcription"/>
    <property type="evidence" value="ECO:0000318"/>
    <property type="project" value="GO_Central"/>
</dbReference>
<dbReference type="GO" id="GO:0006950">
    <property type="term" value="P:response to stress"/>
    <property type="evidence" value="ECO:0007669"/>
    <property type="project" value="UniProtKB-ARBA"/>
</dbReference>
<dbReference type="CDD" id="cd06171">
    <property type="entry name" value="Sigma70_r4"/>
    <property type="match status" value="1"/>
</dbReference>
<dbReference type="Gene3D" id="1.10.1740.10">
    <property type="match status" value="1"/>
</dbReference>
<dbReference type="Gene3D" id="1.10.10.10">
    <property type="entry name" value="Winged helix-like DNA-binding domain superfamily/Winged helix DNA-binding domain"/>
    <property type="match status" value="1"/>
</dbReference>
<dbReference type="InterPro" id="IPR039425">
    <property type="entry name" value="RNA_pol_sigma-70-like"/>
</dbReference>
<dbReference type="InterPro" id="IPR014284">
    <property type="entry name" value="RNA_pol_sigma-70_dom"/>
</dbReference>
<dbReference type="InterPro" id="IPR014304">
    <property type="entry name" value="RNA_pol_sigma-Z"/>
</dbReference>
<dbReference type="InterPro" id="IPR000838">
    <property type="entry name" value="RNA_pol_sigma70_ECF_CS"/>
</dbReference>
<dbReference type="InterPro" id="IPR007627">
    <property type="entry name" value="RNA_pol_sigma70_r2"/>
</dbReference>
<dbReference type="InterPro" id="IPR013249">
    <property type="entry name" value="RNA_pol_sigma70_r4_t2"/>
</dbReference>
<dbReference type="InterPro" id="IPR013325">
    <property type="entry name" value="RNA_pol_sigma_r2"/>
</dbReference>
<dbReference type="InterPro" id="IPR013324">
    <property type="entry name" value="RNA_pol_sigma_r3/r4-like"/>
</dbReference>
<dbReference type="InterPro" id="IPR036388">
    <property type="entry name" value="WH-like_DNA-bd_sf"/>
</dbReference>
<dbReference type="NCBIfam" id="NF007215">
    <property type="entry name" value="PRK09637.1"/>
    <property type="match status" value="1"/>
</dbReference>
<dbReference type="NCBIfam" id="TIGR02937">
    <property type="entry name" value="sigma70-ECF"/>
    <property type="match status" value="1"/>
</dbReference>
<dbReference type="NCBIfam" id="TIGR02959">
    <property type="entry name" value="SigZ"/>
    <property type="match status" value="1"/>
</dbReference>
<dbReference type="PANTHER" id="PTHR43133">
    <property type="entry name" value="RNA POLYMERASE ECF-TYPE SIGMA FACTO"/>
    <property type="match status" value="1"/>
</dbReference>
<dbReference type="PANTHER" id="PTHR43133:SF62">
    <property type="entry name" value="RNA POLYMERASE SIGMA FACTOR SIGZ"/>
    <property type="match status" value="1"/>
</dbReference>
<dbReference type="Pfam" id="PF04542">
    <property type="entry name" value="Sigma70_r2"/>
    <property type="match status" value="1"/>
</dbReference>
<dbReference type="Pfam" id="PF08281">
    <property type="entry name" value="Sigma70_r4_2"/>
    <property type="match status" value="1"/>
</dbReference>
<dbReference type="SUPFAM" id="SSF88946">
    <property type="entry name" value="Sigma2 domain of RNA polymerase sigma factors"/>
    <property type="match status" value="1"/>
</dbReference>
<dbReference type="SUPFAM" id="SSF88659">
    <property type="entry name" value="Sigma3 and sigma4 domains of RNA polymerase sigma factors"/>
    <property type="match status" value="1"/>
</dbReference>
<dbReference type="PROSITE" id="PS01063">
    <property type="entry name" value="SIGMA70_ECF"/>
    <property type="match status" value="1"/>
</dbReference>
<organism>
    <name type="scientific">Bacillus subtilis (strain 168)</name>
    <dbReference type="NCBI Taxonomy" id="224308"/>
    <lineage>
        <taxon>Bacteria</taxon>
        <taxon>Bacillati</taxon>
        <taxon>Bacillota</taxon>
        <taxon>Bacilli</taxon>
        <taxon>Bacillales</taxon>
        <taxon>Bacillaceae</taxon>
        <taxon>Bacillus</taxon>
    </lineage>
</organism>